<reference key="1">
    <citation type="journal article" date="2008" name="PLoS ONE">
        <title>Genetic basis of virulence attenuation revealed by comparative genomic analysis of Mycobacterium tuberculosis strain H37Ra versus H37Rv.</title>
        <authorList>
            <person name="Zheng H."/>
            <person name="Lu L."/>
            <person name="Wang B."/>
            <person name="Pu S."/>
            <person name="Zhang X."/>
            <person name="Zhu G."/>
            <person name="Shi W."/>
            <person name="Zhang L."/>
            <person name="Wang H."/>
            <person name="Wang S."/>
            <person name="Zhao G."/>
            <person name="Zhang Y."/>
        </authorList>
    </citation>
    <scope>NUCLEOTIDE SEQUENCE [LARGE SCALE GENOMIC DNA]</scope>
    <source>
        <strain>ATCC 25177 / H37Ra</strain>
    </source>
</reference>
<comment type="function">
    <text evidence="1">Catalyzes the NADPH-dependent rearrangement and reduction of 1-deoxy-D-xylulose-5-phosphate (DXP) to 2-C-methyl-D-erythritol 4-phosphate (MEP).</text>
</comment>
<comment type="catalytic activity">
    <reaction evidence="1">
        <text>2-C-methyl-D-erythritol 4-phosphate + NADP(+) = 1-deoxy-D-xylulose 5-phosphate + NADPH + H(+)</text>
        <dbReference type="Rhea" id="RHEA:13717"/>
        <dbReference type="ChEBI" id="CHEBI:15378"/>
        <dbReference type="ChEBI" id="CHEBI:57783"/>
        <dbReference type="ChEBI" id="CHEBI:57792"/>
        <dbReference type="ChEBI" id="CHEBI:58262"/>
        <dbReference type="ChEBI" id="CHEBI:58349"/>
        <dbReference type="EC" id="1.1.1.267"/>
    </reaction>
    <physiologicalReaction direction="right-to-left" evidence="1">
        <dbReference type="Rhea" id="RHEA:13719"/>
    </physiologicalReaction>
</comment>
<comment type="cofactor">
    <cofactor evidence="1">
        <name>Mg(2+)</name>
        <dbReference type="ChEBI" id="CHEBI:18420"/>
    </cofactor>
    <cofactor evidence="1">
        <name>Mn(2+)</name>
        <dbReference type="ChEBI" id="CHEBI:29035"/>
    </cofactor>
</comment>
<comment type="pathway">
    <text evidence="1">Isoprenoid biosynthesis; isopentenyl diphosphate biosynthesis via DXP pathway; isopentenyl diphosphate from 1-deoxy-D-xylulose 5-phosphate: step 1/6.</text>
</comment>
<comment type="similarity">
    <text evidence="1">Belongs to the DXR family.</text>
</comment>
<evidence type="ECO:0000255" key="1">
    <source>
        <dbReference type="HAMAP-Rule" id="MF_00183"/>
    </source>
</evidence>
<sequence length="413" mass="42853">MTNSTDGRADGRLRVVVLGSTGSIGTQALQVIADNPDRFEVVGLAAGGAHLDTLLRQRAQTGVTNIAVADEHAAQRVGDIPYHGSDAATRLVEQTEADVVLNALVGALGLRPTLAALKTGARLALANKESLVAGGSLVLRAARPGQIVPVDSEHSALAQCLRGGTPDEVAKLVLTASGGPFRGWSAADLEHVTPEQAGAHPTWSMGPMNTLNSASLVNKGLEVIETHLLFGIPYDRIDVVVHPQSIIHSMVTFIDGSTIAQASPPDMKLPISLALGWPRRVSGAAAACDFHTASSWEFEPLDTDVFPAVELARQAGVAGGCMTAVYNAANEEAAAAFLAGRIGFPAIVGIIADVLHAADQWAVEPATVDDVLDAQRWARERAQRAVSGMASVAIASTAKPGAAGRHASTLERS</sequence>
<feature type="chain" id="PRO_1000020279" description="1-deoxy-D-xylulose 5-phosphate reductoisomerase">
    <location>
        <begin position="1"/>
        <end position="413"/>
    </location>
</feature>
<feature type="binding site" evidence="1">
    <location>
        <position position="21"/>
    </location>
    <ligand>
        <name>NADPH</name>
        <dbReference type="ChEBI" id="CHEBI:57783"/>
    </ligand>
</feature>
<feature type="binding site" evidence="1">
    <location>
        <position position="22"/>
    </location>
    <ligand>
        <name>NADPH</name>
        <dbReference type="ChEBI" id="CHEBI:57783"/>
    </ligand>
</feature>
<feature type="binding site" evidence="1">
    <location>
        <position position="23"/>
    </location>
    <ligand>
        <name>NADPH</name>
        <dbReference type="ChEBI" id="CHEBI:57783"/>
    </ligand>
</feature>
<feature type="binding site" evidence="1">
    <location>
        <position position="24"/>
    </location>
    <ligand>
        <name>NADPH</name>
        <dbReference type="ChEBI" id="CHEBI:57783"/>
    </ligand>
</feature>
<feature type="binding site" evidence="1">
    <location>
        <position position="47"/>
    </location>
    <ligand>
        <name>NADPH</name>
        <dbReference type="ChEBI" id="CHEBI:57783"/>
    </ligand>
</feature>
<feature type="binding site" evidence="1">
    <location>
        <position position="127"/>
    </location>
    <ligand>
        <name>NADPH</name>
        <dbReference type="ChEBI" id="CHEBI:57783"/>
    </ligand>
</feature>
<feature type="binding site" evidence="1">
    <location>
        <position position="128"/>
    </location>
    <ligand>
        <name>1-deoxy-D-xylulose 5-phosphate</name>
        <dbReference type="ChEBI" id="CHEBI:57792"/>
    </ligand>
</feature>
<feature type="binding site" evidence="1">
    <location>
        <position position="129"/>
    </location>
    <ligand>
        <name>NADPH</name>
        <dbReference type="ChEBI" id="CHEBI:57783"/>
    </ligand>
</feature>
<feature type="binding site" evidence="1">
    <location>
        <position position="151"/>
    </location>
    <ligand>
        <name>Mn(2+)</name>
        <dbReference type="ChEBI" id="CHEBI:29035"/>
    </ligand>
</feature>
<feature type="binding site" evidence="1">
    <location>
        <position position="152"/>
    </location>
    <ligand>
        <name>1-deoxy-D-xylulose 5-phosphate</name>
        <dbReference type="ChEBI" id="CHEBI:57792"/>
    </ligand>
</feature>
<feature type="binding site" evidence="1">
    <location>
        <position position="153"/>
    </location>
    <ligand>
        <name>1-deoxy-D-xylulose 5-phosphate</name>
        <dbReference type="ChEBI" id="CHEBI:57792"/>
    </ligand>
</feature>
<feature type="binding site" evidence="1">
    <location>
        <position position="153"/>
    </location>
    <ligand>
        <name>Mn(2+)</name>
        <dbReference type="ChEBI" id="CHEBI:29035"/>
    </ligand>
</feature>
<feature type="binding site" evidence="1">
    <location>
        <position position="177"/>
    </location>
    <ligand>
        <name>1-deoxy-D-xylulose 5-phosphate</name>
        <dbReference type="ChEBI" id="CHEBI:57792"/>
    </ligand>
</feature>
<feature type="binding site" evidence="1">
    <location>
        <position position="200"/>
    </location>
    <ligand>
        <name>1-deoxy-D-xylulose 5-phosphate</name>
        <dbReference type="ChEBI" id="CHEBI:57792"/>
    </ligand>
</feature>
<feature type="binding site" evidence="1">
    <location>
        <position position="206"/>
    </location>
    <ligand>
        <name>NADPH</name>
        <dbReference type="ChEBI" id="CHEBI:57783"/>
    </ligand>
</feature>
<feature type="binding site" evidence="1">
    <location>
        <position position="213"/>
    </location>
    <ligand>
        <name>1-deoxy-D-xylulose 5-phosphate</name>
        <dbReference type="ChEBI" id="CHEBI:57792"/>
    </ligand>
</feature>
<feature type="binding site" evidence="1">
    <location>
        <position position="218"/>
    </location>
    <ligand>
        <name>1-deoxy-D-xylulose 5-phosphate</name>
        <dbReference type="ChEBI" id="CHEBI:57792"/>
    </ligand>
</feature>
<feature type="binding site" evidence="1">
    <location>
        <position position="219"/>
    </location>
    <ligand>
        <name>1-deoxy-D-xylulose 5-phosphate</name>
        <dbReference type="ChEBI" id="CHEBI:57792"/>
    </ligand>
</feature>
<feature type="binding site" evidence="1">
    <location>
        <position position="222"/>
    </location>
    <ligand>
        <name>1-deoxy-D-xylulose 5-phosphate</name>
        <dbReference type="ChEBI" id="CHEBI:57792"/>
    </ligand>
</feature>
<feature type="binding site" evidence="1">
    <location>
        <position position="222"/>
    </location>
    <ligand>
        <name>Mn(2+)</name>
        <dbReference type="ChEBI" id="CHEBI:29035"/>
    </ligand>
</feature>
<accession>A5U6M4</accession>
<dbReference type="EC" id="1.1.1.267" evidence="1"/>
<dbReference type="EMBL" id="CP000611">
    <property type="protein sequence ID" value="ABQ74674.1"/>
    <property type="molecule type" value="Genomic_DNA"/>
</dbReference>
<dbReference type="RefSeq" id="WP_003414613.1">
    <property type="nucleotide sequence ID" value="NZ_CP016972.1"/>
</dbReference>
<dbReference type="SMR" id="A5U6M4"/>
<dbReference type="GeneID" id="45426858"/>
<dbReference type="KEGG" id="mra:MRA_2895"/>
<dbReference type="eggNOG" id="COG0743">
    <property type="taxonomic scope" value="Bacteria"/>
</dbReference>
<dbReference type="HOGENOM" id="CLU_035714_4_0_11"/>
<dbReference type="UniPathway" id="UPA00056">
    <property type="reaction ID" value="UER00092"/>
</dbReference>
<dbReference type="Proteomes" id="UP000001988">
    <property type="component" value="Chromosome"/>
</dbReference>
<dbReference type="GO" id="GO:0030604">
    <property type="term" value="F:1-deoxy-D-xylulose-5-phosphate reductoisomerase activity"/>
    <property type="evidence" value="ECO:0007669"/>
    <property type="project" value="UniProtKB-UniRule"/>
</dbReference>
<dbReference type="GO" id="GO:0030145">
    <property type="term" value="F:manganese ion binding"/>
    <property type="evidence" value="ECO:0007669"/>
    <property type="project" value="TreeGrafter"/>
</dbReference>
<dbReference type="GO" id="GO:0070402">
    <property type="term" value="F:NADPH binding"/>
    <property type="evidence" value="ECO:0007669"/>
    <property type="project" value="InterPro"/>
</dbReference>
<dbReference type="GO" id="GO:0051484">
    <property type="term" value="P:isopentenyl diphosphate biosynthetic process, methylerythritol 4-phosphate pathway involved in terpenoid biosynthetic process"/>
    <property type="evidence" value="ECO:0007669"/>
    <property type="project" value="TreeGrafter"/>
</dbReference>
<dbReference type="FunFam" id="1.10.1740.10:FF:000024">
    <property type="entry name" value="1-deoxy-D-xylulose 5-phosphate reductoisomerase"/>
    <property type="match status" value="1"/>
</dbReference>
<dbReference type="FunFam" id="3.40.50.720:FF:000045">
    <property type="entry name" value="1-deoxy-D-xylulose 5-phosphate reductoisomerase"/>
    <property type="match status" value="1"/>
</dbReference>
<dbReference type="Gene3D" id="1.10.1740.10">
    <property type="match status" value="1"/>
</dbReference>
<dbReference type="Gene3D" id="3.40.50.720">
    <property type="entry name" value="NAD(P)-binding Rossmann-like Domain"/>
    <property type="match status" value="1"/>
</dbReference>
<dbReference type="HAMAP" id="MF_00183">
    <property type="entry name" value="DXP_reductoisom"/>
    <property type="match status" value="1"/>
</dbReference>
<dbReference type="InterPro" id="IPR003821">
    <property type="entry name" value="DXP_reductoisomerase"/>
</dbReference>
<dbReference type="InterPro" id="IPR013644">
    <property type="entry name" value="DXP_reductoisomerase_C"/>
</dbReference>
<dbReference type="InterPro" id="IPR013512">
    <property type="entry name" value="DXP_reductoisomerase_N"/>
</dbReference>
<dbReference type="InterPro" id="IPR026877">
    <property type="entry name" value="DXPR_C"/>
</dbReference>
<dbReference type="InterPro" id="IPR036169">
    <property type="entry name" value="DXPR_C_sf"/>
</dbReference>
<dbReference type="InterPro" id="IPR036291">
    <property type="entry name" value="NAD(P)-bd_dom_sf"/>
</dbReference>
<dbReference type="NCBIfam" id="TIGR00243">
    <property type="entry name" value="Dxr"/>
    <property type="match status" value="1"/>
</dbReference>
<dbReference type="PANTHER" id="PTHR30525">
    <property type="entry name" value="1-DEOXY-D-XYLULOSE 5-PHOSPHATE REDUCTOISOMERASE"/>
    <property type="match status" value="1"/>
</dbReference>
<dbReference type="PANTHER" id="PTHR30525:SF0">
    <property type="entry name" value="1-DEOXY-D-XYLULOSE 5-PHOSPHATE REDUCTOISOMERASE, CHLOROPLASTIC"/>
    <property type="match status" value="1"/>
</dbReference>
<dbReference type="Pfam" id="PF08436">
    <property type="entry name" value="DXP_redisom_C"/>
    <property type="match status" value="1"/>
</dbReference>
<dbReference type="Pfam" id="PF02670">
    <property type="entry name" value="DXP_reductoisom"/>
    <property type="match status" value="1"/>
</dbReference>
<dbReference type="Pfam" id="PF13288">
    <property type="entry name" value="DXPR_C"/>
    <property type="match status" value="1"/>
</dbReference>
<dbReference type="PIRSF" id="PIRSF006205">
    <property type="entry name" value="Dxp_reductismrs"/>
    <property type="match status" value="1"/>
</dbReference>
<dbReference type="SUPFAM" id="SSF69055">
    <property type="entry name" value="1-deoxy-D-xylulose-5-phosphate reductoisomerase, C-terminal domain"/>
    <property type="match status" value="1"/>
</dbReference>
<dbReference type="SUPFAM" id="SSF55347">
    <property type="entry name" value="Glyceraldehyde-3-phosphate dehydrogenase-like, C-terminal domain"/>
    <property type="match status" value="1"/>
</dbReference>
<dbReference type="SUPFAM" id="SSF51735">
    <property type="entry name" value="NAD(P)-binding Rossmann-fold domains"/>
    <property type="match status" value="1"/>
</dbReference>
<proteinExistence type="inferred from homology"/>
<organism>
    <name type="scientific">Mycobacterium tuberculosis (strain ATCC 25177 / H37Ra)</name>
    <dbReference type="NCBI Taxonomy" id="419947"/>
    <lineage>
        <taxon>Bacteria</taxon>
        <taxon>Bacillati</taxon>
        <taxon>Actinomycetota</taxon>
        <taxon>Actinomycetes</taxon>
        <taxon>Mycobacteriales</taxon>
        <taxon>Mycobacteriaceae</taxon>
        <taxon>Mycobacterium</taxon>
        <taxon>Mycobacterium tuberculosis complex</taxon>
    </lineage>
</organism>
<keyword id="KW-0414">Isoprene biosynthesis</keyword>
<keyword id="KW-0464">Manganese</keyword>
<keyword id="KW-0479">Metal-binding</keyword>
<keyword id="KW-0521">NADP</keyword>
<keyword id="KW-0560">Oxidoreductase</keyword>
<keyword id="KW-1185">Reference proteome</keyword>
<name>DXR_MYCTA</name>
<protein>
    <recommendedName>
        <fullName evidence="1">1-deoxy-D-xylulose 5-phosphate reductoisomerase</fullName>
        <shortName evidence="1">DXP reductoisomerase</shortName>
        <ecNumber evidence="1">1.1.1.267</ecNumber>
    </recommendedName>
    <alternativeName>
        <fullName evidence="1">1-deoxyxylulose-5-phosphate reductoisomerase</fullName>
    </alternativeName>
    <alternativeName>
        <fullName evidence="1">2-C-methyl-D-erythritol 4-phosphate synthase</fullName>
    </alternativeName>
</protein>
<gene>
    <name evidence="1" type="primary">dxr</name>
    <name type="ordered locus">MRA_2895</name>
</gene>